<gene>
    <name type="ORF">DDB_G0274935</name>
</gene>
<keyword id="KW-1185">Reference proteome</keyword>
<name>Y7556_DICDI</name>
<protein>
    <recommendedName>
        <fullName>Uncharacterized protein DDB_G0274935</fullName>
    </recommendedName>
</protein>
<dbReference type="EMBL" id="AAFI02000012">
    <property type="protein sequence ID" value="EAL70360.1"/>
    <property type="molecule type" value="Genomic_DNA"/>
</dbReference>
<dbReference type="RefSeq" id="XP_644176.1">
    <property type="nucleotide sequence ID" value="XM_639084.1"/>
</dbReference>
<dbReference type="PaxDb" id="44689-DDB0217556"/>
<dbReference type="EnsemblProtists" id="EAL70360">
    <property type="protein sequence ID" value="EAL70360"/>
    <property type="gene ID" value="DDB_G0274935"/>
</dbReference>
<dbReference type="GeneID" id="8619605"/>
<dbReference type="KEGG" id="ddi:DDB_G0274935"/>
<dbReference type="VEuPathDB" id="AmoebaDB:DDB_G0274935"/>
<dbReference type="HOGENOM" id="CLU_1172505_0_0_1"/>
<dbReference type="InParanoid" id="Q86HS5"/>
<dbReference type="PRO" id="PR:Q86HS5"/>
<dbReference type="Proteomes" id="UP000002195">
    <property type="component" value="Chromosome 2"/>
</dbReference>
<organism>
    <name type="scientific">Dictyostelium discoideum</name>
    <name type="common">Social amoeba</name>
    <dbReference type="NCBI Taxonomy" id="44689"/>
    <lineage>
        <taxon>Eukaryota</taxon>
        <taxon>Amoebozoa</taxon>
        <taxon>Evosea</taxon>
        <taxon>Eumycetozoa</taxon>
        <taxon>Dictyostelia</taxon>
        <taxon>Dictyosteliales</taxon>
        <taxon>Dictyosteliaceae</taxon>
        <taxon>Dictyostelium</taxon>
    </lineage>
</organism>
<proteinExistence type="predicted"/>
<sequence length="237" mass="28374">MNQHQLHQQLQQQLLQQQQQQLQYQQQQHNMQQQQQLLQQQQLKMNIQQQQQQQQQQQQQQQQQQQQQQQQQQLQQQQSPKKTIIQKYNEDLDDMVIKTYTTRLVLTWIYNNPTPPILSPLPKLKVIPNSSSSKQFSNKTLHTSTHTFQDIESYVKEVFDLWDTVLSFFYSQHIKRSKAYYQNVKQSPQNVESDHTVKLTLKSILIGSIYYSDIFFRKSSVLKPKSNFTILDIVISR</sequence>
<accession>Q86HS5</accession>
<accession>Q554Z7</accession>
<reference key="1">
    <citation type="journal article" date="2002" name="Nature">
        <title>Sequence and analysis of chromosome 2 of Dictyostelium discoideum.</title>
        <authorList>
            <person name="Gloeckner G."/>
            <person name="Eichinger L."/>
            <person name="Szafranski K."/>
            <person name="Pachebat J.A."/>
            <person name="Bankier A.T."/>
            <person name="Dear P.H."/>
            <person name="Lehmann R."/>
            <person name="Baumgart C."/>
            <person name="Parra G."/>
            <person name="Abril J.F."/>
            <person name="Guigo R."/>
            <person name="Kumpf K."/>
            <person name="Tunggal B."/>
            <person name="Cox E.C."/>
            <person name="Quail M.A."/>
            <person name="Platzer M."/>
            <person name="Rosenthal A."/>
            <person name="Noegel A.A."/>
        </authorList>
    </citation>
    <scope>NUCLEOTIDE SEQUENCE [LARGE SCALE GENOMIC DNA]</scope>
    <source>
        <strain>AX4</strain>
    </source>
</reference>
<reference key="2">
    <citation type="journal article" date="2005" name="Nature">
        <title>The genome of the social amoeba Dictyostelium discoideum.</title>
        <authorList>
            <person name="Eichinger L."/>
            <person name="Pachebat J.A."/>
            <person name="Gloeckner G."/>
            <person name="Rajandream M.A."/>
            <person name="Sucgang R."/>
            <person name="Berriman M."/>
            <person name="Song J."/>
            <person name="Olsen R."/>
            <person name="Szafranski K."/>
            <person name="Xu Q."/>
            <person name="Tunggal B."/>
            <person name="Kummerfeld S."/>
            <person name="Madera M."/>
            <person name="Konfortov B.A."/>
            <person name="Rivero F."/>
            <person name="Bankier A.T."/>
            <person name="Lehmann R."/>
            <person name="Hamlin N."/>
            <person name="Davies R."/>
            <person name="Gaudet P."/>
            <person name="Fey P."/>
            <person name="Pilcher K."/>
            <person name="Chen G."/>
            <person name="Saunders D."/>
            <person name="Sodergren E.J."/>
            <person name="Davis P."/>
            <person name="Kerhornou A."/>
            <person name="Nie X."/>
            <person name="Hall N."/>
            <person name="Anjard C."/>
            <person name="Hemphill L."/>
            <person name="Bason N."/>
            <person name="Farbrother P."/>
            <person name="Desany B."/>
            <person name="Just E."/>
            <person name="Morio T."/>
            <person name="Rost R."/>
            <person name="Churcher C.M."/>
            <person name="Cooper J."/>
            <person name="Haydock S."/>
            <person name="van Driessche N."/>
            <person name="Cronin A."/>
            <person name="Goodhead I."/>
            <person name="Muzny D.M."/>
            <person name="Mourier T."/>
            <person name="Pain A."/>
            <person name="Lu M."/>
            <person name="Harper D."/>
            <person name="Lindsay R."/>
            <person name="Hauser H."/>
            <person name="James K.D."/>
            <person name="Quiles M."/>
            <person name="Madan Babu M."/>
            <person name="Saito T."/>
            <person name="Buchrieser C."/>
            <person name="Wardroper A."/>
            <person name="Felder M."/>
            <person name="Thangavelu M."/>
            <person name="Johnson D."/>
            <person name="Knights A."/>
            <person name="Loulseged H."/>
            <person name="Mungall K.L."/>
            <person name="Oliver K."/>
            <person name="Price C."/>
            <person name="Quail M.A."/>
            <person name="Urushihara H."/>
            <person name="Hernandez J."/>
            <person name="Rabbinowitsch E."/>
            <person name="Steffen D."/>
            <person name="Sanders M."/>
            <person name="Ma J."/>
            <person name="Kohara Y."/>
            <person name="Sharp S."/>
            <person name="Simmonds M.N."/>
            <person name="Spiegler S."/>
            <person name="Tivey A."/>
            <person name="Sugano S."/>
            <person name="White B."/>
            <person name="Walker D."/>
            <person name="Woodward J.R."/>
            <person name="Winckler T."/>
            <person name="Tanaka Y."/>
            <person name="Shaulsky G."/>
            <person name="Schleicher M."/>
            <person name="Weinstock G.M."/>
            <person name="Rosenthal A."/>
            <person name="Cox E.C."/>
            <person name="Chisholm R.L."/>
            <person name="Gibbs R.A."/>
            <person name="Loomis W.F."/>
            <person name="Platzer M."/>
            <person name="Kay R.R."/>
            <person name="Williams J.G."/>
            <person name="Dear P.H."/>
            <person name="Noegel A.A."/>
            <person name="Barrell B.G."/>
            <person name="Kuspa A."/>
        </authorList>
    </citation>
    <scope>NUCLEOTIDE SEQUENCE [LARGE SCALE GENOMIC DNA]</scope>
    <source>
        <strain>AX4</strain>
    </source>
</reference>
<feature type="chain" id="PRO_0000348131" description="Uncharacterized protein DDB_G0274935">
    <location>
        <begin position="1"/>
        <end position="237"/>
    </location>
</feature>